<proteinExistence type="inferred from homology"/>
<sequence>MRGNIAQLMQQAQKMQENLQKAQEEIAKIEVTGSAGGGMVSVTLTGAKECRKVRIDPSLTSDPEMLEDLIAAAFNDASNKIDAESKSKMGSATAGMQLPPGMKLPF</sequence>
<name>Y1015_STRMK</name>
<accession>B2FR75</accession>
<protein>
    <recommendedName>
        <fullName evidence="1">Nucleoid-associated protein Smlt1015</fullName>
    </recommendedName>
</protein>
<organism>
    <name type="scientific">Stenotrophomonas maltophilia (strain K279a)</name>
    <dbReference type="NCBI Taxonomy" id="522373"/>
    <lineage>
        <taxon>Bacteria</taxon>
        <taxon>Pseudomonadati</taxon>
        <taxon>Pseudomonadota</taxon>
        <taxon>Gammaproteobacteria</taxon>
        <taxon>Lysobacterales</taxon>
        <taxon>Lysobacteraceae</taxon>
        <taxon>Stenotrophomonas</taxon>
        <taxon>Stenotrophomonas maltophilia group</taxon>
    </lineage>
</organism>
<comment type="function">
    <text evidence="1">Binds to DNA and alters its conformation. May be involved in regulation of gene expression, nucleoid organization and DNA protection.</text>
</comment>
<comment type="subunit">
    <text evidence="1">Homodimer.</text>
</comment>
<comment type="subcellular location">
    <subcellularLocation>
        <location evidence="1">Cytoplasm</location>
        <location evidence="1">Nucleoid</location>
    </subcellularLocation>
</comment>
<comment type="similarity">
    <text evidence="1">Belongs to the YbaB/EbfC family.</text>
</comment>
<dbReference type="EMBL" id="AM743169">
    <property type="protein sequence ID" value="CAQ44577.1"/>
    <property type="molecule type" value="Genomic_DNA"/>
</dbReference>
<dbReference type="RefSeq" id="WP_005408298.1">
    <property type="nucleotide sequence ID" value="NC_010943.1"/>
</dbReference>
<dbReference type="SMR" id="B2FR75"/>
<dbReference type="EnsemblBacteria" id="CAQ44577">
    <property type="protein sequence ID" value="CAQ44577"/>
    <property type="gene ID" value="Smlt1015"/>
</dbReference>
<dbReference type="KEGG" id="sml:Smlt1015"/>
<dbReference type="eggNOG" id="COG0718">
    <property type="taxonomic scope" value="Bacteria"/>
</dbReference>
<dbReference type="HOGENOM" id="CLU_140930_0_0_6"/>
<dbReference type="Proteomes" id="UP000008840">
    <property type="component" value="Chromosome"/>
</dbReference>
<dbReference type="GO" id="GO:0043590">
    <property type="term" value="C:bacterial nucleoid"/>
    <property type="evidence" value="ECO:0007669"/>
    <property type="project" value="UniProtKB-UniRule"/>
</dbReference>
<dbReference type="GO" id="GO:0005829">
    <property type="term" value="C:cytosol"/>
    <property type="evidence" value="ECO:0007669"/>
    <property type="project" value="TreeGrafter"/>
</dbReference>
<dbReference type="GO" id="GO:0003677">
    <property type="term" value="F:DNA binding"/>
    <property type="evidence" value="ECO:0007669"/>
    <property type="project" value="UniProtKB-UniRule"/>
</dbReference>
<dbReference type="FunFam" id="3.30.1310.10:FF:000001">
    <property type="entry name" value="Nucleoid-associated protein YbaB"/>
    <property type="match status" value="1"/>
</dbReference>
<dbReference type="Gene3D" id="3.30.1310.10">
    <property type="entry name" value="Nucleoid-associated protein YbaB-like domain"/>
    <property type="match status" value="1"/>
</dbReference>
<dbReference type="HAMAP" id="MF_00274">
    <property type="entry name" value="DNA_YbaB_EbfC"/>
    <property type="match status" value="1"/>
</dbReference>
<dbReference type="InterPro" id="IPR036894">
    <property type="entry name" value="YbaB-like_sf"/>
</dbReference>
<dbReference type="InterPro" id="IPR004401">
    <property type="entry name" value="YbaB/EbfC"/>
</dbReference>
<dbReference type="NCBIfam" id="TIGR00103">
    <property type="entry name" value="DNA_YbaB_EbfC"/>
    <property type="match status" value="1"/>
</dbReference>
<dbReference type="PANTHER" id="PTHR33449">
    <property type="entry name" value="NUCLEOID-ASSOCIATED PROTEIN YBAB"/>
    <property type="match status" value="1"/>
</dbReference>
<dbReference type="PANTHER" id="PTHR33449:SF1">
    <property type="entry name" value="NUCLEOID-ASSOCIATED PROTEIN YBAB"/>
    <property type="match status" value="1"/>
</dbReference>
<dbReference type="Pfam" id="PF02575">
    <property type="entry name" value="YbaB_DNA_bd"/>
    <property type="match status" value="1"/>
</dbReference>
<dbReference type="PIRSF" id="PIRSF004555">
    <property type="entry name" value="UCP004555"/>
    <property type="match status" value="1"/>
</dbReference>
<dbReference type="SUPFAM" id="SSF82607">
    <property type="entry name" value="YbaB-like"/>
    <property type="match status" value="1"/>
</dbReference>
<gene>
    <name type="ordered locus">Smlt1015</name>
</gene>
<reference key="1">
    <citation type="journal article" date="2008" name="Genome Biol.">
        <title>The complete genome, comparative and functional analysis of Stenotrophomonas maltophilia reveals an organism heavily shielded by drug resistance determinants.</title>
        <authorList>
            <person name="Crossman L.C."/>
            <person name="Gould V.C."/>
            <person name="Dow J.M."/>
            <person name="Vernikos G.S."/>
            <person name="Okazaki A."/>
            <person name="Sebaihia M."/>
            <person name="Saunders D."/>
            <person name="Arrowsmith C."/>
            <person name="Carver T."/>
            <person name="Peters N."/>
            <person name="Adlem E."/>
            <person name="Kerhornou A."/>
            <person name="Lord A."/>
            <person name="Murphy L."/>
            <person name="Seeger K."/>
            <person name="Squares R."/>
            <person name="Rutter S."/>
            <person name="Quail M.A."/>
            <person name="Rajandream M.A."/>
            <person name="Harris D."/>
            <person name="Churcher C."/>
            <person name="Bentley S.D."/>
            <person name="Parkhill J."/>
            <person name="Thomson N.R."/>
            <person name="Avison M.B."/>
        </authorList>
    </citation>
    <scope>NUCLEOTIDE SEQUENCE [LARGE SCALE GENOMIC DNA]</scope>
    <source>
        <strain>K279a</strain>
    </source>
</reference>
<evidence type="ECO:0000255" key="1">
    <source>
        <dbReference type="HAMAP-Rule" id="MF_00274"/>
    </source>
</evidence>
<evidence type="ECO:0000256" key="2">
    <source>
        <dbReference type="SAM" id="MobiDB-lite"/>
    </source>
</evidence>
<feature type="chain" id="PRO_1000114653" description="Nucleoid-associated protein Smlt1015">
    <location>
        <begin position="1"/>
        <end position="106"/>
    </location>
</feature>
<feature type="region of interest" description="Disordered" evidence="2">
    <location>
        <begin position="81"/>
        <end position="106"/>
    </location>
</feature>
<keyword id="KW-0963">Cytoplasm</keyword>
<keyword id="KW-0238">DNA-binding</keyword>
<keyword id="KW-1185">Reference proteome</keyword>